<proteinExistence type="inferred from homology"/>
<accession>A8A2J3</accession>
<feature type="chain" id="PRO_1000064993" description="tRNA 5-methylaminomethyl-2-thiouridine biosynthesis bifunctional protein MnmC">
    <location>
        <begin position="1"/>
        <end position="668"/>
    </location>
</feature>
<feature type="region of interest" description="tRNA (mnm(5)s(2)U34)-methyltransferase">
    <location>
        <begin position="1"/>
        <end position="245"/>
    </location>
</feature>
<feature type="region of interest" description="FAD-dependent cmnm(5)s(2)U34 oxidoreductase">
    <location>
        <begin position="270"/>
        <end position="668"/>
    </location>
</feature>
<comment type="function">
    <text evidence="1">Catalyzes the last two steps in the biosynthesis of 5-methylaminomethyl-2-thiouridine (mnm(5)s(2)U) at the wobble position (U34) in tRNA. Catalyzes the FAD-dependent demodification of cmnm(5)s(2)U34 to nm(5)s(2)U34, followed by the transfer of a methyl group from S-adenosyl-L-methionine to nm(5)s(2)U34, to form mnm(5)s(2)U34.</text>
</comment>
<comment type="catalytic activity">
    <reaction evidence="1">
        <text>5-aminomethyl-2-thiouridine(34) in tRNA + S-adenosyl-L-methionine = 5-methylaminomethyl-2-thiouridine(34) in tRNA + S-adenosyl-L-homocysteine + H(+)</text>
        <dbReference type="Rhea" id="RHEA:19569"/>
        <dbReference type="Rhea" id="RHEA-COMP:10195"/>
        <dbReference type="Rhea" id="RHEA-COMP:10197"/>
        <dbReference type="ChEBI" id="CHEBI:15378"/>
        <dbReference type="ChEBI" id="CHEBI:57856"/>
        <dbReference type="ChEBI" id="CHEBI:59789"/>
        <dbReference type="ChEBI" id="CHEBI:74454"/>
        <dbReference type="ChEBI" id="CHEBI:74455"/>
        <dbReference type="EC" id="2.1.1.61"/>
    </reaction>
</comment>
<comment type="cofactor">
    <cofactor evidence="1">
        <name>FAD</name>
        <dbReference type="ChEBI" id="CHEBI:57692"/>
    </cofactor>
</comment>
<comment type="subcellular location">
    <subcellularLocation>
        <location evidence="1">Cytoplasm</location>
    </subcellularLocation>
</comment>
<comment type="similarity">
    <text evidence="1">In the N-terminal section; belongs to the methyltransferase superfamily. tRNA (mnm(5)s(2)U34)-methyltransferase family.</text>
</comment>
<comment type="similarity">
    <text evidence="1">In the C-terminal section; belongs to the DAO family.</text>
</comment>
<evidence type="ECO:0000255" key="1">
    <source>
        <dbReference type="HAMAP-Rule" id="MF_01102"/>
    </source>
</evidence>
<dbReference type="EC" id="2.1.1.61" evidence="1"/>
<dbReference type="EC" id="1.5.-.-" evidence="1"/>
<dbReference type="EMBL" id="CP000802">
    <property type="protein sequence ID" value="ABV06747.1"/>
    <property type="molecule type" value="Genomic_DNA"/>
</dbReference>
<dbReference type="RefSeq" id="WP_000683822.1">
    <property type="nucleotide sequence ID" value="NC_009800.1"/>
</dbReference>
<dbReference type="SMR" id="A8A2J3"/>
<dbReference type="KEGG" id="ecx:EcHS_A2475"/>
<dbReference type="HOGENOM" id="CLU_022427_1_0_6"/>
<dbReference type="GO" id="GO:0005737">
    <property type="term" value="C:cytoplasm"/>
    <property type="evidence" value="ECO:0007669"/>
    <property type="project" value="UniProtKB-SubCell"/>
</dbReference>
<dbReference type="GO" id="GO:0050660">
    <property type="term" value="F:flavin adenine dinucleotide binding"/>
    <property type="evidence" value="ECO:0007669"/>
    <property type="project" value="UniProtKB-UniRule"/>
</dbReference>
<dbReference type="GO" id="GO:0016645">
    <property type="term" value="F:oxidoreductase activity, acting on the CH-NH group of donors"/>
    <property type="evidence" value="ECO:0007669"/>
    <property type="project" value="InterPro"/>
</dbReference>
<dbReference type="GO" id="GO:0004808">
    <property type="term" value="F:tRNA (5-methylaminomethyl-2-thiouridylate)(34)-methyltransferase activity"/>
    <property type="evidence" value="ECO:0007669"/>
    <property type="project" value="UniProtKB-EC"/>
</dbReference>
<dbReference type="GO" id="GO:0032259">
    <property type="term" value="P:methylation"/>
    <property type="evidence" value="ECO:0007669"/>
    <property type="project" value="UniProtKB-KW"/>
</dbReference>
<dbReference type="GO" id="GO:0002098">
    <property type="term" value="P:tRNA wobble uridine modification"/>
    <property type="evidence" value="ECO:0007669"/>
    <property type="project" value="TreeGrafter"/>
</dbReference>
<dbReference type="FunFam" id="3.40.50.150:FF:000107">
    <property type="entry name" value="tRNA 5-methylaminomethyl-2-thiouridine biosynthesis bifunctional protein MnmC"/>
    <property type="match status" value="1"/>
</dbReference>
<dbReference type="Gene3D" id="3.30.9.10">
    <property type="entry name" value="D-Amino Acid Oxidase, subunit A, domain 2"/>
    <property type="match status" value="1"/>
</dbReference>
<dbReference type="Gene3D" id="3.50.50.60">
    <property type="entry name" value="FAD/NAD(P)-binding domain"/>
    <property type="match status" value="1"/>
</dbReference>
<dbReference type="Gene3D" id="3.40.50.150">
    <property type="entry name" value="Vaccinia Virus protein VP39"/>
    <property type="match status" value="1"/>
</dbReference>
<dbReference type="HAMAP" id="MF_01102">
    <property type="entry name" value="MnmC"/>
    <property type="match status" value="1"/>
</dbReference>
<dbReference type="InterPro" id="IPR006076">
    <property type="entry name" value="FAD-dep_OxRdtase"/>
</dbReference>
<dbReference type="InterPro" id="IPR036188">
    <property type="entry name" value="FAD/NAD-bd_sf"/>
</dbReference>
<dbReference type="InterPro" id="IPR008471">
    <property type="entry name" value="MnmC-like_methylTransf"/>
</dbReference>
<dbReference type="InterPro" id="IPR029063">
    <property type="entry name" value="SAM-dependent_MTases_sf"/>
</dbReference>
<dbReference type="InterPro" id="IPR023032">
    <property type="entry name" value="tRNA_MAMT_biosynth_bifunc_MnmC"/>
</dbReference>
<dbReference type="InterPro" id="IPR047785">
    <property type="entry name" value="tRNA_MNMC2"/>
</dbReference>
<dbReference type="InterPro" id="IPR017610">
    <property type="entry name" value="tRNA_S-uridine_synth_MnmC_C"/>
</dbReference>
<dbReference type="NCBIfam" id="TIGR03197">
    <property type="entry name" value="MnmC_Cterm"/>
    <property type="match status" value="1"/>
</dbReference>
<dbReference type="NCBIfam" id="NF002480">
    <property type="entry name" value="PRK01747.1-1"/>
    <property type="match status" value="1"/>
</dbReference>
<dbReference type="NCBIfam" id="NF002481">
    <property type="entry name" value="PRK01747.1-2"/>
    <property type="match status" value="1"/>
</dbReference>
<dbReference type="NCBIfam" id="NF002482">
    <property type="entry name" value="PRK01747.1-3"/>
    <property type="match status" value="1"/>
</dbReference>
<dbReference type="NCBIfam" id="NF002484">
    <property type="entry name" value="PRK01747.1-5"/>
    <property type="match status" value="1"/>
</dbReference>
<dbReference type="NCBIfam" id="NF033855">
    <property type="entry name" value="tRNA_MNMC2"/>
    <property type="match status" value="1"/>
</dbReference>
<dbReference type="PANTHER" id="PTHR13847">
    <property type="entry name" value="SARCOSINE DEHYDROGENASE-RELATED"/>
    <property type="match status" value="1"/>
</dbReference>
<dbReference type="PANTHER" id="PTHR13847:SF283">
    <property type="entry name" value="TRNA 5-METHYLAMINOMETHYL-2-THIOURIDINE BIOSYNTHESIS BIFUNCTIONAL PROTEIN MNMC"/>
    <property type="match status" value="1"/>
</dbReference>
<dbReference type="Pfam" id="PF01266">
    <property type="entry name" value="DAO"/>
    <property type="match status" value="1"/>
</dbReference>
<dbReference type="Pfam" id="PF05430">
    <property type="entry name" value="Methyltransf_30"/>
    <property type="match status" value="1"/>
</dbReference>
<dbReference type="SUPFAM" id="SSF51905">
    <property type="entry name" value="FAD/NAD(P)-binding domain"/>
    <property type="match status" value="1"/>
</dbReference>
<dbReference type="SUPFAM" id="SSF53335">
    <property type="entry name" value="S-adenosyl-L-methionine-dependent methyltransferases"/>
    <property type="match status" value="1"/>
</dbReference>
<name>MNMC_ECOHS</name>
<reference key="1">
    <citation type="journal article" date="2008" name="J. Bacteriol.">
        <title>The pangenome structure of Escherichia coli: comparative genomic analysis of E. coli commensal and pathogenic isolates.</title>
        <authorList>
            <person name="Rasko D.A."/>
            <person name="Rosovitz M.J."/>
            <person name="Myers G.S.A."/>
            <person name="Mongodin E.F."/>
            <person name="Fricke W.F."/>
            <person name="Gajer P."/>
            <person name="Crabtree J."/>
            <person name="Sebaihia M."/>
            <person name="Thomson N.R."/>
            <person name="Chaudhuri R."/>
            <person name="Henderson I.R."/>
            <person name="Sperandio V."/>
            <person name="Ravel J."/>
        </authorList>
    </citation>
    <scope>NUCLEOTIDE SEQUENCE [LARGE SCALE GENOMIC DNA]</scope>
    <source>
        <strain>HS</strain>
    </source>
</reference>
<gene>
    <name evidence="1" type="primary">mnmC</name>
    <name type="ordered locus">EcHS_A2475</name>
</gene>
<keyword id="KW-0963">Cytoplasm</keyword>
<keyword id="KW-0274">FAD</keyword>
<keyword id="KW-0285">Flavoprotein</keyword>
<keyword id="KW-0489">Methyltransferase</keyword>
<keyword id="KW-0511">Multifunctional enzyme</keyword>
<keyword id="KW-0560">Oxidoreductase</keyword>
<keyword id="KW-0949">S-adenosyl-L-methionine</keyword>
<keyword id="KW-0808">Transferase</keyword>
<keyword id="KW-0819">tRNA processing</keyword>
<protein>
    <recommendedName>
        <fullName evidence="1">tRNA 5-methylaminomethyl-2-thiouridine biosynthesis bifunctional protein MnmC</fullName>
        <shortName evidence="1">tRNA mnm(5)s(2)U biosynthesis bifunctional protein</shortName>
    </recommendedName>
    <domain>
        <recommendedName>
            <fullName evidence="1">tRNA (mnm(5)s(2)U34)-methyltransferase</fullName>
            <ecNumber evidence="1">2.1.1.61</ecNumber>
        </recommendedName>
    </domain>
    <domain>
        <recommendedName>
            <fullName evidence="1">FAD-dependent cmnm(5)s(2)U34 oxidoreductase</fullName>
            <ecNumber evidence="1">1.5.-.-</ecNumber>
        </recommendedName>
    </domain>
</protein>
<sequence length="668" mass="74476">MKHYSIQPANLEFNAEGTPVSRDFDDVYFSNDNGLEETRYVFLGGNQLEVRFPEHPHPLFVVAESGFGTGLNFLTLWQAFDQFREAHPQARLQRLHFISFEKFPLTRADLALAHQHWPELAPWAEQLQAQWPMPLPGCHRLLLDEGRVTLDLWFGDINELTSQLDDSLNQKVDAWFLDGFAPAKNPDMWTQNLFNAMARLARPGGTLATFTSAGFVRRGLQEAGFTMQKRKGFGRKREMLCGVMEQTLPLPCSAPWFNRTGSSKREAAIIGGGIASALLSLALLRRGWQVTLYCADEAPALGASGNRQGALYPLLSKHDEALNRFFSNAFTFARRFYDQLPVKFDHDWCGVTQLGWDEKSQHKIAQMLSMDLPAELAVAVEANAVEQITGVATNCSGITYPQGGWLCPAELTRNVLELAQQQGLQIYYQYQLQNLSRKDDCWLLNFAGDQQATHSVVVLANGHQISRFSQTSTLPVYSVAGQVSHIPTTPELAELKQVLCYDGYLTPQNPANQHHCIGASYHRGSEDTAYSEDDQQQNRQRLIDCFPQAQWAKEVDVSDKEARCGVRCATRDHLPMVGNVPDYEATLVEYASLAEQKDEAVSAPVFDDLFMFAALGSRGLCSAPLCAEILAAQMSDEPIPMDASTLAALNPNRLWVRKLLKGKAVKAG</sequence>
<organism>
    <name type="scientific">Escherichia coli O9:H4 (strain HS)</name>
    <dbReference type="NCBI Taxonomy" id="331112"/>
    <lineage>
        <taxon>Bacteria</taxon>
        <taxon>Pseudomonadati</taxon>
        <taxon>Pseudomonadota</taxon>
        <taxon>Gammaproteobacteria</taxon>
        <taxon>Enterobacterales</taxon>
        <taxon>Enterobacteriaceae</taxon>
        <taxon>Escherichia</taxon>
    </lineage>
</organism>